<evidence type="ECO:0000255" key="1">
    <source>
        <dbReference type="HAMAP-Rule" id="MF_00539"/>
    </source>
</evidence>
<evidence type="ECO:0000256" key="2">
    <source>
        <dbReference type="SAM" id="MobiDB-lite"/>
    </source>
</evidence>
<evidence type="ECO:0000305" key="3"/>
<keyword id="KW-0687">Ribonucleoprotein</keyword>
<keyword id="KW-0689">Ribosomal protein</keyword>
<feature type="chain" id="PRO_1000017562" description="Large ribosomal subunit protein bL27">
    <location>
        <begin position="1"/>
        <end position="85"/>
    </location>
</feature>
<feature type="region of interest" description="Disordered" evidence="2">
    <location>
        <begin position="1"/>
        <end position="21"/>
    </location>
</feature>
<proteinExistence type="inferred from homology"/>
<name>RL27_ECTM1</name>
<protein>
    <recommendedName>
        <fullName evidence="1">Large ribosomal subunit protein bL27</fullName>
    </recommendedName>
    <alternativeName>
        <fullName evidence="3">50S ribosomal protein L27</fullName>
    </alternativeName>
</protein>
<comment type="similarity">
    <text evidence="1">Belongs to the bacterial ribosomal protein bL27 family.</text>
</comment>
<dbReference type="EMBL" id="CP000680">
    <property type="protein sequence ID" value="ABP86429.1"/>
    <property type="molecule type" value="Genomic_DNA"/>
</dbReference>
<dbReference type="SMR" id="A4XYL3"/>
<dbReference type="STRING" id="399739.Pmen_3681"/>
<dbReference type="KEGG" id="pmy:Pmen_3681"/>
<dbReference type="PATRIC" id="fig|399739.8.peg.3733"/>
<dbReference type="eggNOG" id="COG0211">
    <property type="taxonomic scope" value="Bacteria"/>
</dbReference>
<dbReference type="HOGENOM" id="CLU_095424_4_1_6"/>
<dbReference type="OrthoDB" id="9803474at2"/>
<dbReference type="GO" id="GO:0022625">
    <property type="term" value="C:cytosolic large ribosomal subunit"/>
    <property type="evidence" value="ECO:0007669"/>
    <property type="project" value="TreeGrafter"/>
</dbReference>
<dbReference type="GO" id="GO:0003735">
    <property type="term" value="F:structural constituent of ribosome"/>
    <property type="evidence" value="ECO:0007669"/>
    <property type="project" value="InterPro"/>
</dbReference>
<dbReference type="GO" id="GO:0006412">
    <property type="term" value="P:translation"/>
    <property type="evidence" value="ECO:0007669"/>
    <property type="project" value="UniProtKB-UniRule"/>
</dbReference>
<dbReference type="FunFam" id="2.40.50.100:FF:000001">
    <property type="entry name" value="50S ribosomal protein L27"/>
    <property type="match status" value="1"/>
</dbReference>
<dbReference type="Gene3D" id="2.40.50.100">
    <property type="match status" value="1"/>
</dbReference>
<dbReference type="HAMAP" id="MF_00539">
    <property type="entry name" value="Ribosomal_bL27"/>
    <property type="match status" value="1"/>
</dbReference>
<dbReference type="InterPro" id="IPR001684">
    <property type="entry name" value="Ribosomal_bL27"/>
</dbReference>
<dbReference type="InterPro" id="IPR018261">
    <property type="entry name" value="Ribosomal_bL27_CS"/>
</dbReference>
<dbReference type="NCBIfam" id="TIGR00062">
    <property type="entry name" value="L27"/>
    <property type="match status" value="1"/>
</dbReference>
<dbReference type="PANTHER" id="PTHR15893:SF0">
    <property type="entry name" value="LARGE RIBOSOMAL SUBUNIT PROTEIN BL27M"/>
    <property type="match status" value="1"/>
</dbReference>
<dbReference type="PANTHER" id="PTHR15893">
    <property type="entry name" value="RIBOSOMAL PROTEIN L27"/>
    <property type="match status" value="1"/>
</dbReference>
<dbReference type="Pfam" id="PF01016">
    <property type="entry name" value="Ribosomal_L27"/>
    <property type="match status" value="1"/>
</dbReference>
<dbReference type="PRINTS" id="PR00063">
    <property type="entry name" value="RIBOSOMALL27"/>
</dbReference>
<dbReference type="SUPFAM" id="SSF110324">
    <property type="entry name" value="Ribosomal L27 protein-like"/>
    <property type="match status" value="1"/>
</dbReference>
<dbReference type="PROSITE" id="PS00831">
    <property type="entry name" value="RIBOSOMAL_L27"/>
    <property type="match status" value="1"/>
</dbReference>
<reference key="1">
    <citation type="submission" date="2007-04" db="EMBL/GenBank/DDBJ databases">
        <title>Complete sequence of Pseudomonas mendocina ymp.</title>
        <authorList>
            <consortium name="US DOE Joint Genome Institute"/>
            <person name="Copeland A."/>
            <person name="Lucas S."/>
            <person name="Lapidus A."/>
            <person name="Barry K."/>
            <person name="Glavina del Rio T."/>
            <person name="Dalin E."/>
            <person name="Tice H."/>
            <person name="Pitluck S."/>
            <person name="Kiss H."/>
            <person name="Brettin T."/>
            <person name="Detter J.C."/>
            <person name="Bruce D."/>
            <person name="Han C."/>
            <person name="Schmutz J."/>
            <person name="Larimer F."/>
            <person name="Land M."/>
            <person name="Hauser L."/>
            <person name="Kyrpides N."/>
            <person name="Mikhailova N."/>
            <person name="Hersman L."/>
            <person name="Dubois J."/>
            <person name="Maurice P."/>
            <person name="Richardson P."/>
        </authorList>
    </citation>
    <scope>NUCLEOTIDE SEQUENCE [LARGE SCALE GENOMIC DNA]</scope>
    <source>
        <strain>ymp</strain>
    </source>
</reference>
<sequence length="85" mass="9193">MAHKKAGGSTRNGRDSESKRLGVKMYGGQVIKAGNIIVRQRGTEFHPGFGVGMGKDHTLFAKIEGVVKFEVKGAFGRRYVSVVQA</sequence>
<gene>
    <name evidence="1" type="primary">rpmA</name>
    <name type="ordered locus">Pmen_3681</name>
</gene>
<organism>
    <name type="scientific">Ectopseudomonas mendocina (strain ymp)</name>
    <name type="common">Pseudomonas mendocina</name>
    <dbReference type="NCBI Taxonomy" id="399739"/>
    <lineage>
        <taxon>Bacteria</taxon>
        <taxon>Pseudomonadati</taxon>
        <taxon>Pseudomonadota</taxon>
        <taxon>Gammaproteobacteria</taxon>
        <taxon>Pseudomonadales</taxon>
        <taxon>Pseudomonadaceae</taxon>
        <taxon>Ectopseudomonas</taxon>
    </lineage>
</organism>
<accession>A4XYL3</accession>